<name>MDTC_SALPC</name>
<proteinExistence type="inferred from homology"/>
<organism>
    <name type="scientific">Salmonella paratyphi C (strain RKS4594)</name>
    <dbReference type="NCBI Taxonomy" id="476213"/>
    <lineage>
        <taxon>Bacteria</taxon>
        <taxon>Pseudomonadati</taxon>
        <taxon>Pseudomonadota</taxon>
        <taxon>Gammaproteobacteria</taxon>
        <taxon>Enterobacterales</taxon>
        <taxon>Enterobacteriaceae</taxon>
        <taxon>Salmonella</taxon>
    </lineage>
</organism>
<protein>
    <recommendedName>
        <fullName evidence="1">Multidrug resistance protein MdtC</fullName>
    </recommendedName>
    <alternativeName>
        <fullName evidence="1">Multidrug transporter MdtC</fullName>
    </alternativeName>
</protein>
<gene>
    <name evidence="1" type="primary">mdtC</name>
    <name type="ordered locus">SPC_1590</name>
</gene>
<keyword id="KW-0997">Cell inner membrane</keyword>
<keyword id="KW-1003">Cell membrane</keyword>
<keyword id="KW-0472">Membrane</keyword>
<keyword id="KW-0812">Transmembrane</keyword>
<keyword id="KW-1133">Transmembrane helix</keyword>
<keyword id="KW-0813">Transport</keyword>
<feature type="chain" id="PRO_1000184871" description="Multidrug resistance protein MdtC">
    <location>
        <begin position="1"/>
        <end position="1026"/>
    </location>
</feature>
<feature type="transmembrane region" description="Helical" evidence="1">
    <location>
        <begin position="15"/>
        <end position="35"/>
    </location>
</feature>
<feature type="transmembrane region" description="Helical" evidence="1">
    <location>
        <begin position="333"/>
        <end position="353"/>
    </location>
</feature>
<feature type="transmembrane region" description="Helical" evidence="1">
    <location>
        <begin position="360"/>
        <end position="380"/>
    </location>
</feature>
<feature type="transmembrane region" description="Helical" evidence="1">
    <location>
        <begin position="387"/>
        <end position="407"/>
    </location>
</feature>
<feature type="transmembrane region" description="Helical" evidence="1">
    <location>
        <begin position="431"/>
        <end position="451"/>
    </location>
</feature>
<feature type="transmembrane region" description="Helical" evidence="1">
    <location>
        <begin position="463"/>
        <end position="483"/>
    </location>
</feature>
<feature type="transmembrane region" description="Helical" evidence="1">
    <location>
        <begin position="528"/>
        <end position="548"/>
    </location>
</feature>
<feature type="transmembrane region" description="Helical" evidence="1">
    <location>
        <begin position="853"/>
        <end position="873"/>
    </location>
</feature>
<feature type="transmembrane region" description="Helical" evidence="1">
    <location>
        <begin position="897"/>
        <end position="917"/>
    </location>
</feature>
<feature type="transmembrane region" description="Helical" evidence="1">
    <location>
        <begin position="953"/>
        <end position="973"/>
    </location>
</feature>
<feature type="transmembrane region" description="Helical" evidence="1">
    <location>
        <begin position="984"/>
        <end position="1004"/>
    </location>
</feature>
<evidence type="ECO:0000255" key="1">
    <source>
        <dbReference type="HAMAP-Rule" id="MF_01424"/>
    </source>
</evidence>
<accession>C0Q1F2</accession>
<dbReference type="EMBL" id="CP000857">
    <property type="protein sequence ID" value="ACN45738.1"/>
    <property type="molecule type" value="Genomic_DNA"/>
</dbReference>
<dbReference type="RefSeq" id="WP_001210090.1">
    <property type="nucleotide sequence ID" value="NC_012125.1"/>
</dbReference>
<dbReference type="SMR" id="C0Q1F2"/>
<dbReference type="KEGG" id="sei:SPC_1590"/>
<dbReference type="HOGENOM" id="CLU_002755_1_2_6"/>
<dbReference type="Proteomes" id="UP000001599">
    <property type="component" value="Chromosome"/>
</dbReference>
<dbReference type="GO" id="GO:0005886">
    <property type="term" value="C:plasma membrane"/>
    <property type="evidence" value="ECO:0007669"/>
    <property type="project" value="UniProtKB-SubCell"/>
</dbReference>
<dbReference type="GO" id="GO:0042910">
    <property type="term" value="F:xenobiotic transmembrane transporter activity"/>
    <property type="evidence" value="ECO:0007669"/>
    <property type="project" value="TreeGrafter"/>
</dbReference>
<dbReference type="FunFam" id="1.20.1640.10:FF:000001">
    <property type="entry name" value="Efflux pump membrane transporter"/>
    <property type="match status" value="1"/>
</dbReference>
<dbReference type="FunFam" id="3.30.70.1430:FF:000001">
    <property type="entry name" value="Efflux pump membrane transporter"/>
    <property type="match status" value="1"/>
</dbReference>
<dbReference type="FunFam" id="3.30.2090.10:FF:000004">
    <property type="entry name" value="Multidrug resistance protein MdtC"/>
    <property type="match status" value="1"/>
</dbReference>
<dbReference type="FunFam" id="3.30.2090.10:FF:000005">
    <property type="entry name" value="Multidrug resistance protein MdtC"/>
    <property type="match status" value="1"/>
</dbReference>
<dbReference type="FunFam" id="3.30.70.1430:FF:000004">
    <property type="entry name" value="Multidrug resistance protein MdtC"/>
    <property type="match status" value="1"/>
</dbReference>
<dbReference type="Gene3D" id="3.30.70.1430">
    <property type="entry name" value="Multidrug efflux transporter AcrB pore domain"/>
    <property type="match status" value="2"/>
</dbReference>
<dbReference type="Gene3D" id="3.30.70.1440">
    <property type="entry name" value="Multidrug efflux transporter AcrB pore domain"/>
    <property type="match status" value="1"/>
</dbReference>
<dbReference type="Gene3D" id="3.30.70.1320">
    <property type="entry name" value="Multidrug efflux transporter AcrB pore domain like"/>
    <property type="match status" value="1"/>
</dbReference>
<dbReference type="Gene3D" id="3.30.2090.10">
    <property type="entry name" value="Multidrug efflux transporter AcrB TolC docking domain, DN and DC subdomains"/>
    <property type="match status" value="2"/>
</dbReference>
<dbReference type="Gene3D" id="1.20.1640.10">
    <property type="entry name" value="Multidrug efflux transporter AcrB transmembrane domain"/>
    <property type="match status" value="2"/>
</dbReference>
<dbReference type="HAMAP" id="MF_01424">
    <property type="entry name" value="MdtC"/>
    <property type="match status" value="1"/>
</dbReference>
<dbReference type="InterPro" id="IPR027463">
    <property type="entry name" value="AcrB_DN_DC_subdom"/>
</dbReference>
<dbReference type="InterPro" id="IPR001036">
    <property type="entry name" value="Acrflvin-R"/>
</dbReference>
<dbReference type="InterPro" id="IPR023931">
    <property type="entry name" value="Multidrug-R_MdtC"/>
</dbReference>
<dbReference type="NCBIfam" id="NF007905">
    <property type="entry name" value="PRK10614.1"/>
    <property type="match status" value="1"/>
</dbReference>
<dbReference type="NCBIfam" id="NF033617">
    <property type="entry name" value="RND_permease_2"/>
    <property type="match status" value="1"/>
</dbReference>
<dbReference type="PANTHER" id="PTHR32063">
    <property type="match status" value="1"/>
</dbReference>
<dbReference type="PANTHER" id="PTHR32063:SF34">
    <property type="entry name" value="MULTIDRUG RESISTANCE PROTEIN MDTC"/>
    <property type="match status" value="1"/>
</dbReference>
<dbReference type="Pfam" id="PF00873">
    <property type="entry name" value="ACR_tran"/>
    <property type="match status" value="1"/>
</dbReference>
<dbReference type="PRINTS" id="PR00702">
    <property type="entry name" value="ACRIFLAVINRP"/>
</dbReference>
<dbReference type="SUPFAM" id="SSF82693">
    <property type="entry name" value="Multidrug efflux transporter AcrB pore domain, PN1, PN2, PC1 and PC2 subdomains"/>
    <property type="match status" value="4"/>
</dbReference>
<dbReference type="SUPFAM" id="SSF82714">
    <property type="entry name" value="Multidrug efflux transporter AcrB TolC docking domain, DN and DC subdomains"/>
    <property type="match status" value="2"/>
</dbReference>
<dbReference type="SUPFAM" id="SSF82866">
    <property type="entry name" value="Multidrug efflux transporter AcrB transmembrane domain"/>
    <property type="match status" value="2"/>
</dbReference>
<comment type="subunit">
    <text evidence="1">Part of a tripartite efflux system composed of MdtA, MdtB and MdtC. MdtC forms a heteromultimer with MdtB.</text>
</comment>
<comment type="subcellular location">
    <subcellularLocation>
        <location evidence="1">Cell inner membrane</location>
        <topology evidence="1">Multi-pass membrane protein</topology>
    </subcellularLocation>
</comment>
<comment type="similarity">
    <text evidence="1">Belongs to the resistance-nodulation-cell division (RND) (TC 2.A.6) family. MdtC subfamily.</text>
</comment>
<sequence length="1026" mass="110995">MRFFALFIYRPVATILIAAAITLCGILGFRLLPVAPLPQVDFPVIMVSASLPGASPETMASSVATPLERSLGRIAGVNEMTSSSSLGSTRIILEFNFDRDINGAARDVQAAINAAQSLLPGGMPSRPTYRKANPSDAPIMILTLTSESWSQGKLYDFASTQLAQTIAQIDGVGDVDVGGSSLPAVRVGLNPQALFNQGVSLDEVREAIDSANVRRPQGAIEDSVHRWQIQTNDELKTAAEYQPLIIHYNNGAAVRLGDVASVTDSVQDVRNAGMTNAKPAILLMIRKLPEANIIQTVDGIRAKLPELRAMIPAAIDLQIAQDRSPTIRASLQEVEETLAISVALVIMVVFLFLRSGRATLIPAVAVPVSLIGTFAAMYLCGFSLNNLSLMALTIATGFVVDDAIVVLENIARHLEAGMKPLQAALQGTREVGFTVISMSLSLVAVFLPLLLMGGLPGRLLREFAVTLSVAIGISLVVSLTLTPMMCGWMLKSSKPRTQPRKRGVGRLLVALQQGYGTSLKWVLNHTRLVGVVFLGTVALNIWLYIAIPKTFFPEQDTGVLMGGIQADQSISFQAMRGKLQDFMKIIRDDPAVNNVTGFTGGSRVNSGMMFITLKPRGERKETAQQIIDRLRVKLAKEPGARLFLMAVQDIRVGGRQANASYQYTLLSDSLAALREWEPKIRKALSALPQLADVNFDQQDNGAEMNLIYDRDTMSRLGIDVQAANSLLNNAFGQRQISTIYQPMNQYKVVMEVDPRYSQDISALEKMFVINRDGKAIPLSYFAQWRPANAPLSVNHQGLSAASTIAFNLPTGTSLSQATEAINRTMTQLGVPPTVRGSFSGTAQVFQQTMNSQLILIVAAIATVYIVLGILYESYVHPLTILSTLPSAGVGALLALELFNAPFSLIALIGIMLLIGIVKKNAIMMVDFALEAQRSGGLTPAQAIFQACLLRFRPIMMTTLAALFGALPLVLSGGDGSELRQPLGITIVGGLVMSQLLTLYTTPVVYLFFDRLRLRFSRKNSKPVVEI</sequence>
<reference key="1">
    <citation type="journal article" date="2009" name="PLoS ONE">
        <title>Salmonella paratyphi C: genetic divergence from Salmonella choleraesuis and pathogenic convergence with Salmonella typhi.</title>
        <authorList>
            <person name="Liu W.-Q."/>
            <person name="Feng Y."/>
            <person name="Wang Y."/>
            <person name="Zou Q.-H."/>
            <person name="Chen F."/>
            <person name="Guo J.-T."/>
            <person name="Peng Y.-H."/>
            <person name="Jin Y."/>
            <person name="Li Y.-G."/>
            <person name="Hu S.-N."/>
            <person name="Johnston R.N."/>
            <person name="Liu G.-R."/>
            <person name="Liu S.-L."/>
        </authorList>
    </citation>
    <scope>NUCLEOTIDE SEQUENCE [LARGE SCALE GENOMIC DNA]</scope>
    <source>
        <strain>RKS4594</strain>
    </source>
</reference>